<keyword id="KW-0028">Amino-acid biosynthesis</keyword>
<keyword id="KW-0963">Cytoplasm</keyword>
<keyword id="KW-0554">One-carbon metabolism</keyword>
<keyword id="KW-0663">Pyridoxal phosphate</keyword>
<keyword id="KW-0808">Transferase</keyword>
<name>GLYA_PARM1</name>
<proteinExistence type="inferred from homology"/>
<dbReference type="EC" id="2.1.2.1" evidence="1"/>
<dbReference type="EMBL" id="AP007255">
    <property type="protein sequence ID" value="BAE51143.1"/>
    <property type="molecule type" value="Genomic_DNA"/>
</dbReference>
<dbReference type="RefSeq" id="WP_011384736.1">
    <property type="nucleotide sequence ID" value="NC_007626.1"/>
</dbReference>
<dbReference type="SMR" id="Q2W4T2"/>
<dbReference type="STRING" id="342108.amb2339"/>
<dbReference type="KEGG" id="mag:amb2339"/>
<dbReference type="HOGENOM" id="CLU_022477_2_1_5"/>
<dbReference type="OrthoDB" id="9803846at2"/>
<dbReference type="UniPathway" id="UPA00193"/>
<dbReference type="UniPathway" id="UPA00288">
    <property type="reaction ID" value="UER01023"/>
</dbReference>
<dbReference type="Proteomes" id="UP000007058">
    <property type="component" value="Chromosome"/>
</dbReference>
<dbReference type="GO" id="GO:0005829">
    <property type="term" value="C:cytosol"/>
    <property type="evidence" value="ECO:0007669"/>
    <property type="project" value="TreeGrafter"/>
</dbReference>
<dbReference type="GO" id="GO:0004372">
    <property type="term" value="F:glycine hydroxymethyltransferase activity"/>
    <property type="evidence" value="ECO:0007669"/>
    <property type="project" value="UniProtKB-UniRule"/>
</dbReference>
<dbReference type="GO" id="GO:0030170">
    <property type="term" value="F:pyridoxal phosphate binding"/>
    <property type="evidence" value="ECO:0007669"/>
    <property type="project" value="UniProtKB-UniRule"/>
</dbReference>
<dbReference type="GO" id="GO:0019264">
    <property type="term" value="P:glycine biosynthetic process from serine"/>
    <property type="evidence" value="ECO:0007669"/>
    <property type="project" value="UniProtKB-UniRule"/>
</dbReference>
<dbReference type="GO" id="GO:0035999">
    <property type="term" value="P:tetrahydrofolate interconversion"/>
    <property type="evidence" value="ECO:0007669"/>
    <property type="project" value="UniProtKB-UniRule"/>
</dbReference>
<dbReference type="CDD" id="cd00378">
    <property type="entry name" value="SHMT"/>
    <property type="match status" value="1"/>
</dbReference>
<dbReference type="FunFam" id="3.40.640.10:FF:000001">
    <property type="entry name" value="Serine hydroxymethyltransferase"/>
    <property type="match status" value="1"/>
</dbReference>
<dbReference type="FunFam" id="3.90.1150.10:FF:000003">
    <property type="entry name" value="Serine hydroxymethyltransferase"/>
    <property type="match status" value="1"/>
</dbReference>
<dbReference type="Gene3D" id="3.90.1150.10">
    <property type="entry name" value="Aspartate Aminotransferase, domain 1"/>
    <property type="match status" value="1"/>
</dbReference>
<dbReference type="Gene3D" id="3.40.640.10">
    <property type="entry name" value="Type I PLP-dependent aspartate aminotransferase-like (Major domain)"/>
    <property type="match status" value="1"/>
</dbReference>
<dbReference type="HAMAP" id="MF_00051">
    <property type="entry name" value="SHMT"/>
    <property type="match status" value="1"/>
</dbReference>
<dbReference type="InterPro" id="IPR015424">
    <property type="entry name" value="PyrdxlP-dep_Trfase"/>
</dbReference>
<dbReference type="InterPro" id="IPR015421">
    <property type="entry name" value="PyrdxlP-dep_Trfase_major"/>
</dbReference>
<dbReference type="InterPro" id="IPR015422">
    <property type="entry name" value="PyrdxlP-dep_Trfase_small"/>
</dbReference>
<dbReference type="InterPro" id="IPR001085">
    <property type="entry name" value="Ser_HO-MeTrfase"/>
</dbReference>
<dbReference type="InterPro" id="IPR049943">
    <property type="entry name" value="Ser_HO-MeTrfase-like"/>
</dbReference>
<dbReference type="InterPro" id="IPR019798">
    <property type="entry name" value="Ser_HO-MeTrfase_PLP_BS"/>
</dbReference>
<dbReference type="InterPro" id="IPR039429">
    <property type="entry name" value="SHMT-like_dom"/>
</dbReference>
<dbReference type="NCBIfam" id="NF000586">
    <property type="entry name" value="PRK00011.1"/>
    <property type="match status" value="1"/>
</dbReference>
<dbReference type="PANTHER" id="PTHR11680">
    <property type="entry name" value="SERINE HYDROXYMETHYLTRANSFERASE"/>
    <property type="match status" value="1"/>
</dbReference>
<dbReference type="PANTHER" id="PTHR11680:SF35">
    <property type="entry name" value="SERINE HYDROXYMETHYLTRANSFERASE 1"/>
    <property type="match status" value="1"/>
</dbReference>
<dbReference type="Pfam" id="PF00464">
    <property type="entry name" value="SHMT"/>
    <property type="match status" value="1"/>
</dbReference>
<dbReference type="PIRSF" id="PIRSF000412">
    <property type="entry name" value="SHMT"/>
    <property type="match status" value="1"/>
</dbReference>
<dbReference type="SUPFAM" id="SSF53383">
    <property type="entry name" value="PLP-dependent transferases"/>
    <property type="match status" value="1"/>
</dbReference>
<dbReference type="PROSITE" id="PS00096">
    <property type="entry name" value="SHMT"/>
    <property type="match status" value="1"/>
</dbReference>
<sequence length="427" mass="45736">MSSAPTDAFFRTPLSERDPEVFAAITQELKRQQDQIELIASENIVSRAVLEAQGSVMTNKYAEGYPGKRYYGGCEFVDIAESLAISRACQIFGCSYANVQPSSGSQANQGVFMALLQPGDTIMGMSLAAGGHLTHGAAPNQSGKWFKAVQYGVRQQDSQIDFAEVEELARTHRPKLIIAGGSAYPRTIDFARFRKIADEVGAFFMVDMAHFAGLVAGGVYPNPLPHAHVVTTTTHKTLRGPRGGMILSNDADIGKKINSAIFPGIQGGPLMHVIAGKAVAFGEALKPEFKLYAKQVVDNARALADTLVRRGLDIVSGGTDSHLMLVDLRPKKLTGKAAEASLEHAGMTCNKNGIPFDPEKPTITSGVRLGTPAATTRGFGVEEFKKVGELIGDVLDGLAANPEDNSAAEARARAEVAELCRRFPIYQ</sequence>
<accession>Q2W4T2</accession>
<protein>
    <recommendedName>
        <fullName evidence="1">Serine hydroxymethyltransferase</fullName>
        <shortName evidence="1">SHMT</shortName>
        <shortName evidence="1">Serine methylase</shortName>
        <ecNumber evidence="1">2.1.2.1</ecNumber>
    </recommendedName>
</protein>
<evidence type="ECO:0000255" key="1">
    <source>
        <dbReference type="HAMAP-Rule" id="MF_00051"/>
    </source>
</evidence>
<feature type="chain" id="PRO_0000234985" description="Serine hydroxymethyltransferase">
    <location>
        <begin position="1"/>
        <end position="427"/>
    </location>
</feature>
<feature type="binding site" evidence="1">
    <location>
        <position position="127"/>
    </location>
    <ligand>
        <name>(6S)-5,6,7,8-tetrahydrofolate</name>
        <dbReference type="ChEBI" id="CHEBI:57453"/>
    </ligand>
</feature>
<feature type="binding site" evidence="1">
    <location>
        <begin position="131"/>
        <end position="133"/>
    </location>
    <ligand>
        <name>(6S)-5,6,7,8-tetrahydrofolate</name>
        <dbReference type="ChEBI" id="CHEBI:57453"/>
    </ligand>
</feature>
<feature type="site" description="Plays an important role in substrate specificity" evidence="1">
    <location>
        <position position="235"/>
    </location>
</feature>
<feature type="modified residue" description="N6-(pyridoxal phosphate)lysine" evidence="1">
    <location>
        <position position="236"/>
    </location>
</feature>
<comment type="function">
    <text evidence="1">Catalyzes the reversible interconversion of serine and glycine with tetrahydrofolate (THF) serving as the one-carbon carrier. This reaction serves as the major source of one-carbon groups required for the biosynthesis of purines, thymidylate, methionine, and other important biomolecules. Also exhibits THF-independent aldolase activity toward beta-hydroxyamino acids, producing glycine and aldehydes, via a retro-aldol mechanism.</text>
</comment>
<comment type="catalytic activity">
    <reaction evidence="1">
        <text>(6R)-5,10-methylene-5,6,7,8-tetrahydrofolate + glycine + H2O = (6S)-5,6,7,8-tetrahydrofolate + L-serine</text>
        <dbReference type="Rhea" id="RHEA:15481"/>
        <dbReference type="ChEBI" id="CHEBI:15377"/>
        <dbReference type="ChEBI" id="CHEBI:15636"/>
        <dbReference type="ChEBI" id="CHEBI:33384"/>
        <dbReference type="ChEBI" id="CHEBI:57305"/>
        <dbReference type="ChEBI" id="CHEBI:57453"/>
        <dbReference type="EC" id="2.1.2.1"/>
    </reaction>
</comment>
<comment type="cofactor">
    <cofactor evidence="1">
        <name>pyridoxal 5'-phosphate</name>
        <dbReference type="ChEBI" id="CHEBI:597326"/>
    </cofactor>
</comment>
<comment type="pathway">
    <text evidence="1">One-carbon metabolism; tetrahydrofolate interconversion.</text>
</comment>
<comment type="pathway">
    <text evidence="1">Amino-acid biosynthesis; glycine biosynthesis; glycine from L-serine: step 1/1.</text>
</comment>
<comment type="subunit">
    <text evidence="1">Homodimer.</text>
</comment>
<comment type="subcellular location">
    <subcellularLocation>
        <location evidence="1">Cytoplasm</location>
    </subcellularLocation>
</comment>
<comment type="similarity">
    <text evidence="1">Belongs to the SHMT family.</text>
</comment>
<reference key="1">
    <citation type="journal article" date="2005" name="DNA Res.">
        <title>Complete genome sequence of the facultative anaerobic magnetotactic bacterium Magnetospirillum sp. strain AMB-1.</title>
        <authorList>
            <person name="Matsunaga T."/>
            <person name="Okamura Y."/>
            <person name="Fukuda Y."/>
            <person name="Wahyudi A.T."/>
            <person name="Murase Y."/>
            <person name="Takeyama H."/>
        </authorList>
    </citation>
    <scope>NUCLEOTIDE SEQUENCE [LARGE SCALE GENOMIC DNA]</scope>
    <source>
        <strain>ATCC 700264 / AMB-1</strain>
    </source>
</reference>
<organism>
    <name type="scientific">Paramagnetospirillum magneticum (strain ATCC 700264 / AMB-1)</name>
    <name type="common">Magnetospirillum magneticum</name>
    <dbReference type="NCBI Taxonomy" id="342108"/>
    <lineage>
        <taxon>Bacteria</taxon>
        <taxon>Pseudomonadati</taxon>
        <taxon>Pseudomonadota</taxon>
        <taxon>Alphaproteobacteria</taxon>
        <taxon>Rhodospirillales</taxon>
        <taxon>Magnetospirillaceae</taxon>
        <taxon>Paramagnetospirillum</taxon>
    </lineage>
</organism>
<gene>
    <name evidence="1" type="primary">glyA</name>
    <name type="ordered locus">amb2339</name>
</gene>